<dbReference type="EMBL" id="AM040264">
    <property type="protein sequence ID" value="CAJ10436.1"/>
    <property type="molecule type" value="Genomic_DNA"/>
</dbReference>
<dbReference type="RefSeq" id="WP_002963611.1">
    <property type="nucleotide sequence ID" value="NZ_KN046823.1"/>
</dbReference>
<dbReference type="SMR" id="Q2YMG9"/>
<dbReference type="STRING" id="359391.BAB1_0480"/>
<dbReference type="GeneID" id="97534175"/>
<dbReference type="KEGG" id="bmf:BAB1_0480"/>
<dbReference type="PATRIC" id="fig|359391.11.peg.2520"/>
<dbReference type="HOGENOM" id="CLU_113441_2_0_5"/>
<dbReference type="PhylomeDB" id="Q2YMG9"/>
<dbReference type="Proteomes" id="UP000002719">
    <property type="component" value="Chromosome I"/>
</dbReference>
<dbReference type="GO" id="GO:0022627">
    <property type="term" value="C:cytosolic small ribosomal subunit"/>
    <property type="evidence" value="ECO:0007669"/>
    <property type="project" value="TreeGrafter"/>
</dbReference>
<dbReference type="GO" id="GO:0070181">
    <property type="term" value="F:small ribosomal subunit rRNA binding"/>
    <property type="evidence" value="ECO:0007669"/>
    <property type="project" value="TreeGrafter"/>
</dbReference>
<dbReference type="GO" id="GO:0003735">
    <property type="term" value="F:structural constituent of ribosome"/>
    <property type="evidence" value="ECO:0007669"/>
    <property type="project" value="InterPro"/>
</dbReference>
<dbReference type="GO" id="GO:0006412">
    <property type="term" value="P:translation"/>
    <property type="evidence" value="ECO:0007669"/>
    <property type="project" value="UniProtKB-UniRule"/>
</dbReference>
<dbReference type="CDD" id="cd00473">
    <property type="entry name" value="bS6"/>
    <property type="match status" value="1"/>
</dbReference>
<dbReference type="Gene3D" id="3.30.70.60">
    <property type="match status" value="1"/>
</dbReference>
<dbReference type="HAMAP" id="MF_00360">
    <property type="entry name" value="Ribosomal_bS6"/>
    <property type="match status" value="1"/>
</dbReference>
<dbReference type="InterPro" id="IPR000529">
    <property type="entry name" value="Ribosomal_bS6"/>
</dbReference>
<dbReference type="InterPro" id="IPR035980">
    <property type="entry name" value="Ribosomal_bS6_sf"/>
</dbReference>
<dbReference type="InterPro" id="IPR020814">
    <property type="entry name" value="Ribosomal_S6_plastid/chlpt"/>
</dbReference>
<dbReference type="InterPro" id="IPR014717">
    <property type="entry name" value="Transl_elong_EF1B/ribsomal_bS6"/>
</dbReference>
<dbReference type="NCBIfam" id="TIGR00166">
    <property type="entry name" value="S6"/>
    <property type="match status" value="1"/>
</dbReference>
<dbReference type="PANTHER" id="PTHR21011">
    <property type="entry name" value="MITOCHONDRIAL 28S RIBOSOMAL PROTEIN S6"/>
    <property type="match status" value="1"/>
</dbReference>
<dbReference type="PANTHER" id="PTHR21011:SF1">
    <property type="entry name" value="SMALL RIBOSOMAL SUBUNIT PROTEIN BS6M"/>
    <property type="match status" value="1"/>
</dbReference>
<dbReference type="Pfam" id="PF01250">
    <property type="entry name" value="Ribosomal_S6"/>
    <property type="match status" value="1"/>
</dbReference>
<dbReference type="SUPFAM" id="SSF54995">
    <property type="entry name" value="Ribosomal protein S6"/>
    <property type="match status" value="1"/>
</dbReference>
<keyword id="KW-1185">Reference proteome</keyword>
<keyword id="KW-0687">Ribonucleoprotein</keyword>
<keyword id="KW-0689">Ribosomal protein</keyword>
<keyword id="KW-0694">RNA-binding</keyword>
<keyword id="KW-0699">rRNA-binding</keyword>
<sequence>MALYEHVLLARQDISQQQVDALVEQFKGVLEANGGKFGKVENWGLRPLTYRIKKNRKAYYTLVNIDAPAAAVAEMERQMRINEDVLRFLTVRVEEHEEGQSAMLTRRDDRRERDGDDRPRRREGGFDRGDRGDRGPRRPRDNEAGEGA</sequence>
<accession>Q2YMG9</accession>
<comment type="function">
    <text evidence="1">Binds together with bS18 to 16S ribosomal RNA.</text>
</comment>
<comment type="similarity">
    <text evidence="1">Belongs to the bacterial ribosomal protein bS6 family.</text>
</comment>
<feature type="chain" id="PRO_0000229527" description="Small ribosomal subunit protein bS6">
    <location>
        <begin position="1"/>
        <end position="148"/>
    </location>
</feature>
<feature type="region of interest" description="Disordered" evidence="2">
    <location>
        <begin position="96"/>
        <end position="148"/>
    </location>
</feature>
<gene>
    <name evidence="1" type="primary">rpsF</name>
    <name type="ordered locus">BAB1_0480</name>
</gene>
<reference key="1">
    <citation type="journal article" date="2005" name="Infect. Immun.">
        <title>Whole-genome analyses of speciation events in pathogenic Brucellae.</title>
        <authorList>
            <person name="Chain P.S."/>
            <person name="Comerci D.J."/>
            <person name="Tolmasky M.E."/>
            <person name="Larimer F.W."/>
            <person name="Malfatti S.A."/>
            <person name="Vergez L.M."/>
            <person name="Aguero F."/>
            <person name="Land M.L."/>
            <person name="Ugalde R.A."/>
            <person name="Garcia E."/>
        </authorList>
    </citation>
    <scope>NUCLEOTIDE SEQUENCE [LARGE SCALE GENOMIC DNA]</scope>
    <source>
        <strain>2308</strain>
    </source>
</reference>
<proteinExistence type="inferred from homology"/>
<name>RS6_BRUA2</name>
<organism>
    <name type="scientific">Brucella abortus (strain 2308)</name>
    <dbReference type="NCBI Taxonomy" id="359391"/>
    <lineage>
        <taxon>Bacteria</taxon>
        <taxon>Pseudomonadati</taxon>
        <taxon>Pseudomonadota</taxon>
        <taxon>Alphaproteobacteria</taxon>
        <taxon>Hyphomicrobiales</taxon>
        <taxon>Brucellaceae</taxon>
        <taxon>Brucella/Ochrobactrum group</taxon>
        <taxon>Brucella</taxon>
    </lineage>
</organism>
<evidence type="ECO:0000255" key="1">
    <source>
        <dbReference type="HAMAP-Rule" id="MF_00360"/>
    </source>
</evidence>
<evidence type="ECO:0000256" key="2">
    <source>
        <dbReference type="SAM" id="MobiDB-lite"/>
    </source>
</evidence>
<evidence type="ECO:0000305" key="3"/>
<protein>
    <recommendedName>
        <fullName evidence="1">Small ribosomal subunit protein bS6</fullName>
    </recommendedName>
    <alternativeName>
        <fullName evidence="3">30S ribosomal protein S6</fullName>
    </alternativeName>
</protein>